<protein>
    <recommendedName>
        <fullName evidence="3">HTH-type transcriptional regulator BilQ</fullName>
    </recommendedName>
    <alternativeName>
        <fullName evidence="2">Bilirubin reductase operon protein Q</fullName>
    </alternativeName>
</protein>
<dbReference type="EMBL" id="ADLQ01000094">
    <property type="protein sequence ID" value="EGA91965.1"/>
    <property type="molecule type" value="Genomic_DNA"/>
</dbReference>
<dbReference type="RefSeq" id="WP_003504325.1">
    <property type="nucleotide sequence ID" value="NZ_GL834319.1"/>
</dbReference>
<dbReference type="SMR" id="E7GT88"/>
<dbReference type="STRING" id="1512.GCA_900049235_04465"/>
<dbReference type="eggNOG" id="COG1846">
    <property type="taxonomic scope" value="Bacteria"/>
</dbReference>
<dbReference type="HOGENOM" id="CLU_083287_18_0_9"/>
<dbReference type="Proteomes" id="UP000002970">
    <property type="component" value="Unassembled WGS sequence"/>
</dbReference>
<dbReference type="GO" id="GO:0003677">
    <property type="term" value="F:DNA binding"/>
    <property type="evidence" value="ECO:0007669"/>
    <property type="project" value="UniProtKB-KW"/>
</dbReference>
<dbReference type="GO" id="GO:0003700">
    <property type="term" value="F:DNA-binding transcription factor activity"/>
    <property type="evidence" value="ECO:0007669"/>
    <property type="project" value="InterPro"/>
</dbReference>
<dbReference type="Gene3D" id="1.10.10.10">
    <property type="entry name" value="Winged helix-like DNA-binding domain superfamily/Winged helix DNA-binding domain"/>
    <property type="match status" value="1"/>
</dbReference>
<dbReference type="InterPro" id="IPR054630">
    <property type="entry name" value="BilQ"/>
</dbReference>
<dbReference type="InterPro" id="IPR000835">
    <property type="entry name" value="HTH_MarR-typ"/>
</dbReference>
<dbReference type="InterPro" id="IPR023187">
    <property type="entry name" value="Tscrpt_reg_MarR-type_CS"/>
</dbReference>
<dbReference type="InterPro" id="IPR036388">
    <property type="entry name" value="WH-like_DNA-bd_sf"/>
</dbReference>
<dbReference type="InterPro" id="IPR036390">
    <property type="entry name" value="WH_DNA-bd_sf"/>
</dbReference>
<dbReference type="NCBIfam" id="NF045593">
    <property type="entry name" value="bilirub_TF_BilQ"/>
    <property type="match status" value="1"/>
</dbReference>
<dbReference type="PANTHER" id="PTHR42756">
    <property type="entry name" value="TRANSCRIPTIONAL REGULATOR, MARR"/>
    <property type="match status" value="1"/>
</dbReference>
<dbReference type="PANTHER" id="PTHR42756:SF1">
    <property type="entry name" value="TRANSCRIPTIONAL REPRESSOR OF EMRAB OPERON"/>
    <property type="match status" value="1"/>
</dbReference>
<dbReference type="Pfam" id="PF01047">
    <property type="entry name" value="MarR"/>
    <property type="match status" value="1"/>
</dbReference>
<dbReference type="PRINTS" id="PR00598">
    <property type="entry name" value="HTHMARR"/>
</dbReference>
<dbReference type="SMART" id="SM00347">
    <property type="entry name" value="HTH_MARR"/>
    <property type="match status" value="1"/>
</dbReference>
<dbReference type="SUPFAM" id="SSF46785">
    <property type="entry name" value="Winged helix' DNA-binding domain"/>
    <property type="match status" value="1"/>
</dbReference>
<dbReference type="PROSITE" id="PS01117">
    <property type="entry name" value="HTH_MARR_1"/>
    <property type="match status" value="1"/>
</dbReference>
<dbReference type="PROSITE" id="PS50995">
    <property type="entry name" value="HTH_MARR_2"/>
    <property type="match status" value="1"/>
</dbReference>
<keyword id="KW-0238">DNA-binding</keyword>
<keyword id="KW-1185">Reference proteome</keyword>
<keyword id="KW-0804">Transcription</keyword>
<keyword id="KW-0805">Transcription regulation</keyword>
<comment type="function">
    <text evidence="4">Transcription regulator that regulates expression of the bilirubin reductase operon (bilQ, bilR and bilS).</text>
</comment>
<reference key="1">
    <citation type="submission" date="2010-12" db="EMBL/GenBank/DDBJ databases">
        <title>The Genome Sequence of Clostridium symbiosum strain WAL-14163.</title>
        <authorList>
            <person name="Earl A."/>
            <person name="Ward D."/>
            <person name="Feldgarden M."/>
            <person name="Gevers D."/>
            <person name="Finegold S.M."/>
            <person name="Summanen P.H."/>
            <person name="Molitoris D.R."/>
            <person name="Vaisanen M.L."/>
            <person name="Daigneault M."/>
            <person name="Young S.K."/>
            <person name="Zeng Q."/>
            <person name="Gargeya S."/>
            <person name="Fitzgerald M."/>
            <person name="Haas B."/>
            <person name="Abouelleil A."/>
            <person name="Alvarado L."/>
            <person name="Arachchi H.M."/>
            <person name="Berlin A."/>
            <person name="Brown A."/>
            <person name="Chapman S.B."/>
            <person name="Chen Z."/>
            <person name="Dunbar C."/>
            <person name="Freedman E."/>
            <person name="Gearin G."/>
            <person name="Gellesch M."/>
            <person name="Goldberg J."/>
            <person name="Griggs A."/>
            <person name="Gujja S."/>
            <person name="Heilman E."/>
            <person name="Heiman D."/>
            <person name="Howarth C."/>
            <person name="Larson L."/>
            <person name="Lui A."/>
            <person name="MacDonald P.J.P."/>
            <person name="Mehta T."/>
            <person name="Montmayeur A."/>
            <person name="Murphy C."/>
            <person name="Neiman D."/>
            <person name="Pearson M."/>
            <person name="Priest M."/>
            <person name="Roberts A."/>
            <person name="Saif S."/>
            <person name="Shea T."/>
            <person name="Shenoy N."/>
            <person name="Sisk P."/>
            <person name="Stolte C."/>
            <person name="Sykes S."/>
            <person name="White J."/>
            <person name="Yandava C."/>
            <person name="Nusbaum C."/>
            <person name="Birren B."/>
        </authorList>
    </citation>
    <scope>NUCLEOTIDE SEQUENCE [LARGE SCALE GENOMIC DNA]</scope>
    <source>
        <strain>WAL-14163</strain>
    </source>
</reference>
<reference key="2">
    <citation type="journal article" date="2024" name="Nat. Microbiol.">
        <title>BilR is a gut microbial enzyme that reduces bilirubin to urobilinogen.</title>
        <authorList>
            <person name="Hall B."/>
            <person name="Levy S."/>
            <person name="Dufault-Thompson K."/>
            <person name="Arp G."/>
            <person name="Zhong A."/>
            <person name="Ndjite G.M."/>
            <person name="Weiss A."/>
            <person name="Braccia D."/>
            <person name="Jenkins C."/>
            <person name="Grant M.R."/>
            <person name="Abeysinghe S."/>
            <person name="Yang Y."/>
            <person name="Jermain M.D."/>
            <person name="Wu C.H."/>
            <person name="Ma B."/>
            <person name="Jiang X."/>
        </authorList>
    </citation>
    <scope>POSSIBLE FUNCTION</scope>
</reference>
<gene>
    <name evidence="2" type="primary">bilQ</name>
    <name evidence="5" type="ORF">HMPREF9474_04133</name>
</gene>
<feature type="chain" id="PRO_0000460435" description="HTH-type transcriptional regulator BilQ">
    <location>
        <begin position="1"/>
        <end position="144"/>
    </location>
</feature>
<feature type="domain" description="HTH marR-type" evidence="1">
    <location>
        <begin position="1"/>
        <end position="134"/>
    </location>
</feature>
<feature type="DNA-binding region" description="H-T-H motif" evidence="1">
    <location>
        <begin position="48"/>
        <end position="71"/>
    </location>
</feature>
<sequence>MEQTFAYYTTIFREDFTLFCKSELQKEGISLGLLYFVIYIGKKPGCSQRELAAAVRADEGYAARSVEKLLQDGFIERRRHEKDKRMAILTLTMKGEKTFEKAHSLFHEWDDKVLSSLQEEEKKQLFTLLQKLGKTKEAHLCMKK</sequence>
<name>BILQ_CLOS6</name>
<evidence type="ECO:0000255" key="1">
    <source>
        <dbReference type="PROSITE-ProRule" id="PRU00345"/>
    </source>
</evidence>
<evidence type="ECO:0000303" key="2">
    <source>
    </source>
</evidence>
<evidence type="ECO:0000305" key="3"/>
<evidence type="ECO:0000305" key="4">
    <source>
    </source>
</evidence>
<evidence type="ECO:0000312" key="5">
    <source>
        <dbReference type="EMBL" id="EGA91965.1"/>
    </source>
</evidence>
<accession>E7GT88</accession>
<proteinExistence type="predicted"/>
<organism>
    <name type="scientific">Clostridium symbiosum (strain WAL-14163)</name>
    <dbReference type="NCBI Taxonomy" id="742740"/>
    <lineage>
        <taxon>Bacteria</taxon>
        <taxon>Bacillati</taxon>
        <taxon>Bacillota</taxon>
        <taxon>Clostridia</taxon>
        <taxon>Lachnospirales</taxon>
        <taxon>Lachnospiraceae</taxon>
    </lineage>
</organism>